<accession>Q97TX8</accession>
<evidence type="ECO:0000255" key="1">
    <source>
        <dbReference type="HAMAP-Rule" id="MF_01084"/>
    </source>
</evidence>
<keyword id="KW-0489">Methyltransferase</keyword>
<keyword id="KW-1185">Reference proteome</keyword>
<keyword id="KW-0949">S-adenosyl-L-methionine</keyword>
<keyword id="KW-0808">Transferase</keyword>
<protein>
    <recommendedName>
        <fullName evidence="1">Diphthine synthase</fullName>
        <ecNumber evidence="1">2.1.1.98</ecNumber>
    </recommendedName>
    <alternativeName>
        <fullName evidence="1">Diphthamide biosynthesis methyltransferase</fullName>
    </alternativeName>
</protein>
<comment type="function">
    <text evidence="1">S-adenosyl-L-methionine-dependent methyltransferase that catalyzes the trimethylation of the amino group of the modified target histidine residue in translation elongation factor 2 (EF-2), to form an intermediate called diphthine. The three successive methylation reactions represent the second step of diphthamide biosynthesis.</text>
</comment>
<comment type="catalytic activity">
    <reaction evidence="1">
        <text>2-[(3S)-amino-3-carboxypropyl]-L-histidyl-[translation elongation factor 2] + 3 S-adenosyl-L-methionine = diphthine-[translation elongation factor 2] + 3 S-adenosyl-L-homocysteine + 3 H(+)</text>
        <dbReference type="Rhea" id="RHEA:36415"/>
        <dbReference type="Rhea" id="RHEA-COMP:9749"/>
        <dbReference type="Rhea" id="RHEA-COMP:10172"/>
        <dbReference type="ChEBI" id="CHEBI:15378"/>
        <dbReference type="ChEBI" id="CHEBI:57856"/>
        <dbReference type="ChEBI" id="CHEBI:59789"/>
        <dbReference type="ChEBI" id="CHEBI:73995"/>
        <dbReference type="ChEBI" id="CHEBI:82696"/>
        <dbReference type="EC" id="2.1.1.98"/>
    </reaction>
</comment>
<comment type="pathway">
    <text evidence="1">Protein modification; peptidyl-diphthamide biosynthesis.</text>
</comment>
<comment type="subunit">
    <text evidence="1">Homodimer.</text>
</comment>
<comment type="similarity">
    <text evidence="1">Belongs to the diphthine synthase family.</text>
</comment>
<sequence length="257" mass="28834">MSILSLVGLGISKKFITDSAIETLSNSDIIIFDRYTSRSCDINVDVLRRLVKGEREFIEADRSLLENNSKAIIDYLDKGYNVSIASIGDALIATTHVSLLIEAKHRGHEVKVIPGISVHCYLISKSLLSSYKFGKSVTVTFPYNDFIDPTPYNVIKDNKERGLHTILYLDLKNEKAMTANEALQILLRLEERHKKSVLSKSDIIIVGARLGCDDERIIALKVEEATSFDFGNTPHIIIIPGNLHYMEADAIKWILRS</sequence>
<organism>
    <name type="scientific">Saccharolobus solfataricus (strain ATCC 35092 / DSM 1617 / JCM 11322 / P2)</name>
    <name type="common">Sulfolobus solfataricus</name>
    <dbReference type="NCBI Taxonomy" id="273057"/>
    <lineage>
        <taxon>Archaea</taxon>
        <taxon>Thermoproteota</taxon>
        <taxon>Thermoprotei</taxon>
        <taxon>Sulfolobales</taxon>
        <taxon>Sulfolobaceae</taxon>
        <taxon>Saccharolobus</taxon>
    </lineage>
</organism>
<dbReference type="EC" id="2.1.1.98" evidence="1"/>
<dbReference type="EMBL" id="AE006641">
    <property type="protein sequence ID" value="AAK41227.1"/>
    <property type="molecule type" value="Genomic_DNA"/>
</dbReference>
<dbReference type="PIR" id="D90246">
    <property type="entry name" value="D90246"/>
</dbReference>
<dbReference type="SMR" id="Q97TX8"/>
<dbReference type="FunCoup" id="Q97TX8">
    <property type="interactions" value="246"/>
</dbReference>
<dbReference type="STRING" id="273057.SSO0953"/>
<dbReference type="PaxDb" id="273057-SSO0953"/>
<dbReference type="EnsemblBacteria" id="AAK41227">
    <property type="protein sequence ID" value="AAK41227"/>
    <property type="gene ID" value="SSO0953"/>
</dbReference>
<dbReference type="KEGG" id="sso:SSO0953"/>
<dbReference type="PATRIC" id="fig|273057.12.peg.949"/>
<dbReference type="eggNOG" id="arCOG04161">
    <property type="taxonomic scope" value="Archaea"/>
</dbReference>
<dbReference type="HOGENOM" id="CLU_066040_0_0_2"/>
<dbReference type="InParanoid" id="Q97TX8"/>
<dbReference type="PhylomeDB" id="Q97TX8"/>
<dbReference type="UniPathway" id="UPA00559"/>
<dbReference type="Proteomes" id="UP000001974">
    <property type="component" value="Chromosome"/>
</dbReference>
<dbReference type="GO" id="GO:0004164">
    <property type="term" value="F:diphthine synthase activity"/>
    <property type="evidence" value="ECO:0007669"/>
    <property type="project" value="UniProtKB-UniRule"/>
</dbReference>
<dbReference type="GO" id="GO:0032259">
    <property type="term" value="P:methylation"/>
    <property type="evidence" value="ECO:0007669"/>
    <property type="project" value="UniProtKB-KW"/>
</dbReference>
<dbReference type="GO" id="GO:0017183">
    <property type="term" value="P:protein histidyl modification to diphthamide"/>
    <property type="evidence" value="ECO:0007669"/>
    <property type="project" value="UniProtKB-UniRule"/>
</dbReference>
<dbReference type="CDD" id="cd11647">
    <property type="entry name" value="DHP5_DphB"/>
    <property type="match status" value="1"/>
</dbReference>
<dbReference type="Gene3D" id="3.40.1010.10">
    <property type="entry name" value="Cobalt-precorrin-4 Transmethylase, Domain 1"/>
    <property type="match status" value="1"/>
</dbReference>
<dbReference type="Gene3D" id="3.30.950.10">
    <property type="entry name" value="Methyltransferase, Cobalt-precorrin-4 Transmethylase, Domain 2"/>
    <property type="match status" value="1"/>
</dbReference>
<dbReference type="HAMAP" id="MF_01084">
    <property type="entry name" value="Diphthine_synth"/>
    <property type="match status" value="1"/>
</dbReference>
<dbReference type="InterPro" id="IPR000878">
    <property type="entry name" value="4pyrrol_Mease"/>
</dbReference>
<dbReference type="InterPro" id="IPR035996">
    <property type="entry name" value="4pyrrol_Methylase_sf"/>
</dbReference>
<dbReference type="InterPro" id="IPR014777">
    <property type="entry name" value="4pyrrole_Mease_sub1"/>
</dbReference>
<dbReference type="InterPro" id="IPR014776">
    <property type="entry name" value="4pyrrole_Mease_sub2"/>
</dbReference>
<dbReference type="InterPro" id="IPR004551">
    <property type="entry name" value="Dphthn_synthase"/>
</dbReference>
<dbReference type="NCBIfam" id="TIGR00522">
    <property type="entry name" value="dph5"/>
    <property type="match status" value="1"/>
</dbReference>
<dbReference type="PANTHER" id="PTHR10882:SF0">
    <property type="entry name" value="DIPHTHINE METHYL ESTER SYNTHASE"/>
    <property type="match status" value="1"/>
</dbReference>
<dbReference type="PANTHER" id="PTHR10882">
    <property type="entry name" value="DIPHTHINE SYNTHASE"/>
    <property type="match status" value="1"/>
</dbReference>
<dbReference type="Pfam" id="PF00590">
    <property type="entry name" value="TP_methylase"/>
    <property type="match status" value="1"/>
</dbReference>
<dbReference type="PIRSF" id="PIRSF036432">
    <property type="entry name" value="Diphthine_synth"/>
    <property type="match status" value="1"/>
</dbReference>
<dbReference type="SUPFAM" id="SSF53790">
    <property type="entry name" value="Tetrapyrrole methylase"/>
    <property type="match status" value="1"/>
</dbReference>
<feature type="chain" id="PRO_0000156128" description="Diphthine synthase">
    <location>
        <begin position="1"/>
        <end position="257"/>
    </location>
</feature>
<feature type="binding site" evidence="1">
    <location>
        <position position="11"/>
    </location>
    <ligand>
        <name>S-adenosyl-L-methionine</name>
        <dbReference type="ChEBI" id="CHEBI:59789"/>
    </ligand>
</feature>
<feature type="binding site" evidence="1">
    <location>
        <position position="89"/>
    </location>
    <ligand>
        <name>S-adenosyl-L-methionine</name>
        <dbReference type="ChEBI" id="CHEBI:59789"/>
    </ligand>
</feature>
<feature type="binding site" evidence="1">
    <location>
        <position position="92"/>
    </location>
    <ligand>
        <name>S-adenosyl-L-methionine</name>
        <dbReference type="ChEBI" id="CHEBI:59789"/>
    </ligand>
</feature>
<feature type="binding site" evidence="1">
    <location>
        <begin position="117"/>
        <end position="118"/>
    </location>
    <ligand>
        <name>S-adenosyl-L-methionine</name>
        <dbReference type="ChEBI" id="CHEBI:59789"/>
    </ligand>
</feature>
<feature type="binding site" evidence="1">
    <location>
        <position position="169"/>
    </location>
    <ligand>
        <name>S-adenosyl-L-methionine</name>
        <dbReference type="ChEBI" id="CHEBI:59789"/>
    </ligand>
</feature>
<feature type="binding site" evidence="1">
    <location>
        <position position="210"/>
    </location>
    <ligand>
        <name>S-adenosyl-L-methionine</name>
        <dbReference type="ChEBI" id="CHEBI:59789"/>
    </ligand>
</feature>
<feature type="binding site" evidence="1">
    <location>
        <position position="235"/>
    </location>
    <ligand>
        <name>S-adenosyl-L-methionine</name>
        <dbReference type="ChEBI" id="CHEBI:59789"/>
    </ligand>
</feature>
<gene>
    <name evidence="1" type="primary">dphB</name>
    <name type="ordered locus">SSO0953</name>
</gene>
<reference key="1">
    <citation type="journal article" date="2001" name="Proc. Natl. Acad. Sci. U.S.A.">
        <title>The complete genome of the crenarchaeon Sulfolobus solfataricus P2.</title>
        <authorList>
            <person name="She Q."/>
            <person name="Singh R.K."/>
            <person name="Confalonieri F."/>
            <person name="Zivanovic Y."/>
            <person name="Allard G."/>
            <person name="Awayez M.J."/>
            <person name="Chan-Weiher C.C.-Y."/>
            <person name="Clausen I.G."/>
            <person name="Curtis B.A."/>
            <person name="De Moors A."/>
            <person name="Erauso G."/>
            <person name="Fletcher C."/>
            <person name="Gordon P.M.K."/>
            <person name="Heikamp-de Jong I."/>
            <person name="Jeffries A.C."/>
            <person name="Kozera C.J."/>
            <person name="Medina N."/>
            <person name="Peng X."/>
            <person name="Thi-Ngoc H.P."/>
            <person name="Redder P."/>
            <person name="Schenk M.E."/>
            <person name="Theriault C."/>
            <person name="Tolstrup N."/>
            <person name="Charlebois R.L."/>
            <person name="Doolittle W.F."/>
            <person name="Duguet M."/>
            <person name="Gaasterland T."/>
            <person name="Garrett R.A."/>
            <person name="Ragan M.A."/>
            <person name="Sensen C.W."/>
            <person name="Van der Oost J."/>
        </authorList>
    </citation>
    <scope>NUCLEOTIDE SEQUENCE [LARGE SCALE GENOMIC DNA]</scope>
    <source>
        <strain>ATCC 35092 / DSM 1617 / JCM 11322 / P2</strain>
    </source>
</reference>
<proteinExistence type="inferred from homology"/>
<name>DPHB_SACS2</name>